<evidence type="ECO:0000255" key="1">
    <source>
        <dbReference type="HAMAP-Rule" id="MF_01843"/>
    </source>
</evidence>
<evidence type="ECO:0000256" key="2">
    <source>
        <dbReference type="SAM" id="MobiDB-lite"/>
    </source>
</evidence>
<sequence>MNPVRTLSATKAAFFSAYPRPINAVYRRVVEELLVELHLTTVNSTFVYDPFFALGLVTLYDGLMEAYHPPEQREAIFNALCKALHLKPEVLRKNARDLLELMGSGDPRQRLDLLCLKPEAEDVGGLKAILERMTQPPYAYSRVLAVGLYTAYEVVAKSLYEEPEERTRRFLENVVSKLPFSTERVRKDLELYRSSLDRMKQARAVVEEMVKAARRQQERRQSAASLPETSLGDPSKPGS</sequence>
<proteinExistence type="inferred from homology"/>
<dbReference type="EMBL" id="CP000240">
    <property type="status" value="NOT_ANNOTATED_CDS"/>
    <property type="molecule type" value="Genomic_DNA"/>
</dbReference>
<dbReference type="SMR" id="P0C1D1"/>
<dbReference type="Proteomes" id="UP000001938">
    <property type="component" value="Chromosome"/>
</dbReference>
<dbReference type="GO" id="GO:0030096">
    <property type="term" value="C:plasma membrane-derived thylakoid photosystem II"/>
    <property type="evidence" value="ECO:0007669"/>
    <property type="project" value="TreeGrafter"/>
</dbReference>
<dbReference type="GO" id="GO:0010207">
    <property type="term" value="P:photosystem II assembly"/>
    <property type="evidence" value="ECO:0007669"/>
    <property type="project" value="InterPro"/>
</dbReference>
<dbReference type="HAMAP" id="MF_01843">
    <property type="entry name" value="Thf1"/>
    <property type="match status" value="1"/>
</dbReference>
<dbReference type="InterPro" id="IPR017499">
    <property type="entry name" value="Thf1"/>
</dbReference>
<dbReference type="NCBIfam" id="TIGR03060">
    <property type="entry name" value="PS_II_psb29"/>
    <property type="match status" value="1"/>
</dbReference>
<dbReference type="PANTHER" id="PTHR34793">
    <property type="entry name" value="PROTEIN THYLAKOID FORMATION 1, CHLOROPLASTIC"/>
    <property type="match status" value="1"/>
</dbReference>
<dbReference type="PANTHER" id="PTHR34793:SF1">
    <property type="entry name" value="PROTEIN THYLAKOID FORMATION 1, CHLOROPLASTIC"/>
    <property type="match status" value="1"/>
</dbReference>
<dbReference type="Pfam" id="PF11264">
    <property type="entry name" value="ThylakoidFormat"/>
    <property type="match status" value="1"/>
</dbReference>
<gene>
    <name evidence="1" type="primary">thf1</name>
    <name type="ordered locus">CYB_0501</name>
</gene>
<keyword id="KW-0175">Coiled coil</keyword>
<keyword id="KW-1185">Reference proteome</keyword>
<comment type="function">
    <text evidence="1">May be involved in photosynthetic membrane biogenesis.</text>
</comment>
<comment type="similarity">
    <text evidence="1">Belongs to the THF1 family.</text>
</comment>
<name>THF1_SYNJB</name>
<reference key="1">
    <citation type="journal article" date="2007" name="ISME J.">
        <title>Population level functional diversity in a microbial community revealed by comparative genomic and metagenomic analyses.</title>
        <authorList>
            <person name="Bhaya D."/>
            <person name="Grossman A.R."/>
            <person name="Steunou A.-S."/>
            <person name="Khuri N."/>
            <person name="Cohan F.M."/>
            <person name="Hamamura N."/>
            <person name="Melendrez M.C."/>
            <person name="Bateson M.M."/>
            <person name="Ward D.M."/>
            <person name="Heidelberg J.F."/>
        </authorList>
    </citation>
    <scope>NUCLEOTIDE SEQUENCE [LARGE SCALE GENOMIC DNA]</scope>
    <source>
        <strain>JA-2-3B'a(2-13)</strain>
    </source>
</reference>
<protein>
    <recommendedName>
        <fullName evidence="1">Protein Thf1</fullName>
    </recommendedName>
</protein>
<organism>
    <name type="scientific">Synechococcus sp. (strain JA-2-3B'a(2-13))</name>
    <name type="common">Cyanobacteria bacterium Yellowstone B-Prime</name>
    <dbReference type="NCBI Taxonomy" id="321332"/>
    <lineage>
        <taxon>Bacteria</taxon>
        <taxon>Bacillati</taxon>
        <taxon>Cyanobacteriota</taxon>
        <taxon>Cyanophyceae</taxon>
        <taxon>Synechococcales</taxon>
        <taxon>Synechococcaceae</taxon>
        <taxon>Synechococcus</taxon>
    </lineage>
</organism>
<accession>P0C1D1</accession>
<feature type="chain" id="PRO_0000235220" description="Protein Thf1">
    <location>
        <begin position="1"/>
        <end position="239"/>
    </location>
</feature>
<feature type="region of interest" description="Disordered" evidence="2">
    <location>
        <begin position="211"/>
        <end position="239"/>
    </location>
</feature>
<feature type="coiled-coil region" evidence="1">
    <location>
        <begin position="183"/>
        <end position="221"/>
    </location>
</feature>
<feature type="compositionally biased region" description="Basic and acidic residues" evidence="2">
    <location>
        <begin position="211"/>
        <end position="221"/>
    </location>
</feature>